<feature type="chain" id="PRO_0000149277" description="Alpha-N-acetylgalactosaminide alpha-2,6-sialyltransferase 3">
    <location>
        <begin position="1"/>
        <end position="305"/>
    </location>
</feature>
<feature type="topological domain" description="Cytoplasmic" evidence="5">
    <location>
        <begin position="1"/>
        <end position="8"/>
    </location>
</feature>
<feature type="transmembrane region" description="Helical; Signal-anchor for type II membrane protein" evidence="5">
    <location>
        <begin position="9"/>
        <end position="29"/>
    </location>
</feature>
<feature type="topological domain" description="Lumenal" evidence="5">
    <location>
        <begin position="30"/>
        <end position="305"/>
    </location>
</feature>
<feature type="glycosylation site" description="N-linked (GlcNAc...) asparagine" evidence="5">
    <location>
        <position position="239"/>
    </location>
</feature>
<feature type="glycosylation site" description="N-linked (GlcNAc...) asparagine" evidence="5">
    <location>
        <position position="301"/>
    </location>
</feature>
<feature type="disulfide bond" evidence="1">
    <location>
        <begin position="80"/>
        <end position="229"/>
    </location>
</feature>
<name>SIA7C_RAT</name>
<sequence>MACILKRKPALAVSFIALCILLLAMRLANDVTFPLLLNCFGQPKTKWIPLSYTLRQPLQTHYGYINVRTQEPLQLNCNHCAVVSNSGQMVGQKVGEEIDRASCIWRMNNAPTKGFEEDVGYMTMVRVVSHTSVPLLLKNPDYFFKEASTTIYVIWGPFRNMRKDGNGIVYNMLKKTVDAYPDAQIYVTTEQRMTYCDGVFKDETGKDRVQSGSYLSTGWFTFILAMDACYSIHVYGMINETYCTTEGYRKVPYHYYEQGKDECNEYLLHEHAPYGGHRFITEKKVFAKWAKKHRIVFTHPNWTVS</sequence>
<dbReference type="EC" id="2.4.3.7" evidence="6"/>
<dbReference type="EMBL" id="L29554">
    <property type="protein sequence ID" value="AAC42086.1"/>
    <property type="molecule type" value="mRNA"/>
</dbReference>
<dbReference type="RefSeq" id="NP_061996.1">
    <property type="nucleotide sequence ID" value="NM_019123.1"/>
</dbReference>
<dbReference type="FunCoup" id="Q64686">
    <property type="interactions" value="706"/>
</dbReference>
<dbReference type="STRING" id="10116.ENSRNOP00000073209"/>
<dbReference type="BindingDB" id="Q64686"/>
<dbReference type="ChEMBL" id="CHEMBL2198"/>
<dbReference type="SwissLipids" id="SLP:000001429"/>
<dbReference type="CAZy" id="GT29">
    <property type="family name" value="Glycosyltransferase Family 29"/>
</dbReference>
<dbReference type="GlyCosmos" id="Q64686">
    <property type="glycosylation" value="2 sites, No reported glycans"/>
</dbReference>
<dbReference type="GlyGen" id="Q64686">
    <property type="glycosylation" value="2 sites"/>
</dbReference>
<dbReference type="PhosphoSitePlus" id="Q64686"/>
<dbReference type="PaxDb" id="10116-ENSRNOP00000068331"/>
<dbReference type="GeneID" id="29758"/>
<dbReference type="KEGG" id="rno:29758"/>
<dbReference type="AGR" id="RGD:3677"/>
<dbReference type="CTD" id="256435"/>
<dbReference type="RGD" id="3677">
    <property type="gene designation" value="St6galnac3"/>
</dbReference>
<dbReference type="eggNOG" id="KOG2692">
    <property type="taxonomic scope" value="Eukaryota"/>
</dbReference>
<dbReference type="InParanoid" id="Q64686"/>
<dbReference type="OrthoDB" id="10264956at2759"/>
<dbReference type="PhylomeDB" id="Q64686"/>
<dbReference type="Reactome" id="R-RNO-4085001">
    <property type="pathway name" value="Sialic acid metabolism"/>
</dbReference>
<dbReference type="Reactome" id="R-RNO-977068">
    <property type="pathway name" value="Termination of O-glycan biosynthesis"/>
</dbReference>
<dbReference type="UniPathway" id="UPA00378"/>
<dbReference type="PRO" id="PR:Q64686"/>
<dbReference type="Proteomes" id="UP000002494">
    <property type="component" value="Unplaced"/>
</dbReference>
<dbReference type="GO" id="GO:0000139">
    <property type="term" value="C:Golgi membrane"/>
    <property type="evidence" value="ECO:0007669"/>
    <property type="project" value="UniProtKB-SubCell"/>
</dbReference>
<dbReference type="GO" id="GO:0001665">
    <property type="term" value="F:alpha-N-acetylgalactosaminide alpha-2,6-sialyltransferase activity"/>
    <property type="evidence" value="ECO:0000318"/>
    <property type="project" value="GO_Central"/>
</dbReference>
<dbReference type="GO" id="GO:0047290">
    <property type="term" value="F:alpha-N-acetylneuraminyl-2,3-beta-galactosyl-1,3-N-acetyl-galactosaminide 6-alpha-sialyltransferase activity"/>
    <property type="evidence" value="ECO:0007669"/>
    <property type="project" value="RHEA"/>
</dbReference>
<dbReference type="GO" id="GO:0008373">
    <property type="term" value="F:sialyltransferase activity"/>
    <property type="evidence" value="ECO:0000314"/>
    <property type="project" value="RGD"/>
</dbReference>
<dbReference type="GO" id="GO:0001574">
    <property type="term" value="P:ganglioside biosynthetic process"/>
    <property type="evidence" value="ECO:0000318"/>
    <property type="project" value="GO_Central"/>
</dbReference>
<dbReference type="GO" id="GO:0009100">
    <property type="term" value="P:glycoprotein metabolic process"/>
    <property type="evidence" value="ECO:0000266"/>
    <property type="project" value="RGD"/>
</dbReference>
<dbReference type="GO" id="GO:0006687">
    <property type="term" value="P:glycosphingolipid metabolic process"/>
    <property type="evidence" value="ECO:0000266"/>
    <property type="project" value="RGD"/>
</dbReference>
<dbReference type="GO" id="GO:0006677">
    <property type="term" value="P:glycosylceramide metabolic process"/>
    <property type="evidence" value="ECO:0000266"/>
    <property type="project" value="RGD"/>
</dbReference>
<dbReference type="GO" id="GO:0009311">
    <property type="term" value="P:oligosaccharide metabolic process"/>
    <property type="evidence" value="ECO:0000318"/>
    <property type="project" value="GO_Central"/>
</dbReference>
<dbReference type="GO" id="GO:0006486">
    <property type="term" value="P:protein glycosylation"/>
    <property type="evidence" value="ECO:0007669"/>
    <property type="project" value="UniProtKB-UniPathway"/>
</dbReference>
<dbReference type="FunFam" id="3.90.1480.20:FF:000008">
    <property type="entry name" value="ST6 N-acetylgalactosaminide alpha-2,6-sialyltransferase 3"/>
    <property type="match status" value="1"/>
</dbReference>
<dbReference type="Gene3D" id="3.90.1480.20">
    <property type="entry name" value="Glycosyl transferase family 29"/>
    <property type="match status" value="1"/>
</dbReference>
<dbReference type="InterPro" id="IPR001675">
    <property type="entry name" value="Glyco_trans_29"/>
</dbReference>
<dbReference type="InterPro" id="IPR038578">
    <property type="entry name" value="GT29-like_sf"/>
</dbReference>
<dbReference type="PANTHER" id="PTHR45906">
    <property type="entry name" value="ALPHA-N-ACETYL-NEURAMINYL-2,3-BETA-GALACTOSYL-1, 3-N-ACETYL-GALACTOSAMINIDE ALPHA-2,6-SIALYLTRANSFERASE-LIKE"/>
    <property type="match status" value="1"/>
</dbReference>
<dbReference type="PANTHER" id="PTHR45906:SF2">
    <property type="entry name" value="ALPHA-N-ACETYLGALACTOSAMINIDE ALPHA-2,6-SIALYLTRANSFERASE 3"/>
    <property type="match status" value="1"/>
</dbReference>
<dbReference type="Pfam" id="PF00777">
    <property type="entry name" value="Glyco_transf_29"/>
    <property type="match status" value="1"/>
</dbReference>
<gene>
    <name type="primary">St6galnac3</name>
    <name type="synonym">Siat7c</name>
</gene>
<proteinExistence type="evidence at protein level"/>
<organism>
    <name type="scientific">Rattus norvegicus</name>
    <name type="common">Rat</name>
    <dbReference type="NCBI Taxonomy" id="10116"/>
    <lineage>
        <taxon>Eukaryota</taxon>
        <taxon>Metazoa</taxon>
        <taxon>Chordata</taxon>
        <taxon>Craniata</taxon>
        <taxon>Vertebrata</taxon>
        <taxon>Euteleostomi</taxon>
        <taxon>Mammalia</taxon>
        <taxon>Eutheria</taxon>
        <taxon>Euarchontoglires</taxon>
        <taxon>Glires</taxon>
        <taxon>Rodentia</taxon>
        <taxon>Myomorpha</taxon>
        <taxon>Muroidea</taxon>
        <taxon>Muridae</taxon>
        <taxon>Murinae</taxon>
        <taxon>Rattus</taxon>
    </lineage>
</organism>
<reference key="1">
    <citation type="journal article" date="1996" name="J. Biol. Chem.">
        <title>Molecular cloning of a developmentally regulated N-acetylgalactosamine alpha2,6-sialyltransferase specific for sialylated glycoconjugates.</title>
        <authorList>
            <person name="Sjoberg E.R."/>
            <person name="Kitagawa H."/>
            <person name="Glushka J."/>
            <person name="van Halbeek H."/>
            <person name="Paulson J.C."/>
        </authorList>
    </citation>
    <scope>NUCLEOTIDE SEQUENCE [MRNA]</scope>
    <scope>FUNCTION</scope>
    <scope>CATALYTIC ACTIVITY</scope>
    <scope>TISSUE SPECIFICITY</scope>
    <source>
        <strain>Sprague-Dawley</strain>
        <tissue>Brain</tissue>
    </source>
</reference>
<keyword id="KW-1015">Disulfide bond</keyword>
<keyword id="KW-0325">Glycoprotein</keyword>
<keyword id="KW-0328">Glycosyltransferase</keyword>
<keyword id="KW-0333">Golgi apparatus</keyword>
<keyword id="KW-0443">Lipid metabolism</keyword>
<keyword id="KW-0472">Membrane</keyword>
<keyword id="KW-1185">Reference proteome</keyword>
<keyword id="KW-0730">Sialic acid</keyword>
<keyword id="KW-0735">Signal-anchor</keyword>
<keyword id="KW-0808">Transferase</keyword>
<keyword id="KW-0812">Transmembrane</keyword>
<keyword id="KW-1133">Transmembrane helix</keyword>
<protein>
    <recommendedName>
        <fullName>Alpha-N-acetylgalactosaminide alpha-2,6-sialyltransferase 3</fullName>
        <ecNumber evidence="6">2.4.3.7</ecNumber>
    </recommendedName>
    <alternativeName>
        <fullName>GalNAc alpha-2,6-sialyltransferase III</fullName>
    </alternativeName>
    <alternativeName>
        <fullName evidence="7">ST6GalNAc III</fullName>
        <shortName>ST6GalNAcIII</shortName>
    </alternativeName>
    <alternativeName>
        <fullName>STY</fullName>
    </alternativeName>
    <alternativeName>
        <fullName>Sialyltransferase 7C</fullName>
        <shortName>SIAT7-C</shortName>
    </alternativeName>
</protein>
<evidence type="ECO:0000250" key="1"/>
<evidence type="ECO:0000250" key="2">
    <source>
        <dbReference type="UniProtKB" id="Q8NDV1"/>
    </source>
</evidence>
<evidence type="ECO:0000250" key="3">
    <source>
        <dbReference type="UniProtKB" id="Q9QYJ1"/>
    </source>
</evidence>
<evidence type="ECO:0000250" key="4">
    <source>
        <dbReference type="UniProtKB" id="Q9WUV2"/>
    </source>
</evidence>
<evidence type="ECO:0000255" key="5"/>
<evidence type="ECO:0000269" key="6">
    <source>
    </source>
</evidence>
<evidence type="ECO:0000303" key="7">
    <source>
    </source>
</evidence>
<evidence type="ECO:0000305" key="8"/>
<evidence type="ECO:0000305" key="9">
    <source>
    </source>
</evidence>
<comment type="function">
    <text evidence="2 3 6">Transfers the sialyl group (N-acetyl-alpha-neuraminyl or NeuAc) from CMP-NeuAc to the GalNAc residue on the NeuAc-alpha-2,3-Gal-beta-1,3-GalNAc sequence of glycoproteins and glycolipids forming an alpha-2,6-linkage. Produces branched type disialyl structures by transfer of a sialyl group onto a GalNAc residue inside the backbone core chains. ST6GalNAcIII prefers glycolipids to glycoproteins, predominantly catalyzing the biosynthesis of ganglioside GD1alpha from GM1b (PubMed:8631773). GD1alpha is a critical molecule in the communication and interaction between neuronal cells and their supportive cells, particularly in brain tissues, and functions as an adhesion molecule in the process of metastasis (By similarity). Sialylation of glycoproteins or glycosphingolipids is very important in tumor development, neuronal development, nerve repair, immunological processes and regulation of hormone sensitivity (By similarity).</text>
</comment>
<comment type="catalytic activity">
    <reaction evidence="6">
        <text>an alpha-Neu5Ac-(2-&gt;3)-beta-D-Gal-(1-&gt;3)-D-GlcNAc derivative + CMP-N-acetyl-beta-neuraminate = an alpha-Neu5Ac-(2-&gt;3)-beta-D-Gal-(1-&gt;3)-[alpha-Neu5Ac-(2-&gt;6)]-D-GlcNAc derivative + CMP + H(+)</text>
        <dbReference type="Rhea" id="RHEA:53896"/>
        <dbReference type="ChEBI" id="CHEBI:15378"/>
        <dbReference type="ChEBI" id="CHEBI:57812"/>
        <dbReference type="ChEBI" id="CHEBI:60377"/>
        <dbReference type="ChEBI" id="CHEBI:146021"/>
        <dbReference type="ChEBI" id="CHEBI:149714"/>
        <dbReference type="EC" id="2.4.3.7"/>
    </reaction>
    <physiologicalReaction direction="left-to-right" evidence="9">
        <dbReference type="Rhea" id="RHEA:53897"/>
    </physiologicalReaction>
</comment>
<comment type="catalytic activity">
    <reaction evidence="6">
        <text>a ganglioside GM1b + CMP-N-acetyl-beta-neuraminate = a ganglioside GD1alpha + CMP + H(+)</text>
        <dbReference type="Rhea" id="RHEA:48316"/>
        <dbReference type="ChEBI" id="CHEBI:15378"/>
        <dbReference type="ChEBI" id="CHEBI:57812"/>
        <dbReference type="ChEBI" id="CHEBI:60377"/>
        <dbReference type="ChEBI" id="CHEBI:90151"/>
        <dbReference type="ChEBI" id="CHEBI:90246"/>
    </reaction>
    <physiologicalReaction direction="left-to-right" evidence="9">
        <dbReference type="Rhea" id="RHEA:48317"/>
    </physiologicalReaction>
</comment>
<comment type="catalytic activity">
    <reaction evidence="4">
        <text>a ganglioside GM1b (d18:1(4E)) + CMP-N-acetyl-beta-neuraminate = a ganglioside GD1alpha (d18:1(4E)) + CMP + H(+)</text>
        <dbReference type="Rhea" id="RHEA:41968"/>
        <dbReference type="ChEBI" id="CHEBI:15378"/>
        <dbReference type="ChEBI" id="CHEBI:57812"/>
        <dbReference type="ChEBI" id="CHEBI:60377"/>
        <dbReference type="ChEBI" id="CHEBI:78568"/>
        <dbReference type="ChEBI" id="CHEBI:78569"/>
    </reaction>
    <physiologicalReaction direction="left-to-right" evidence="4">
        <dbReference type="Rhea" id="RHEA:41969"/>
    </physiologicalReaction>
</comment>
<comment type="catalytic activity">
    <reaction evidence="2">
        <text>a globoside MSGG + CMP-N-acetyl-beta-neuraminate = a globoside DSGG + CMP + H(+)</text>
        <dbReference type="Rhea" id="RHEA:56088"/>
        <dbReference type="ChEBI" id="CHEBI:15378"/>
        <dbReference type="ChEBI" id="CHEBI:57812"/>
        <dbReference type="ChEBI" id="CHEBI:60377"/>
        <dbReference type="ChEBI" id="CHEBI:140623"/>
        <dbReference type="ChEBI" id="CHEBI:140624"/>
    </reaction>
    <physiologicalReaction direction="left-to-right" evidence="2">
        <dbReference type="Rhea" id="RHEA:56089"/>
    </physiologicalReaction>
</comment>
<comment type="catalytic activity">
    <reaction evidence="2">
        <text>3-O-[alpha-Neu5Ac-(2-&gt;3)-beta-D-Gal-(1-&gt;3)-alpha-D-GalNAc]-L-Ser-[protein] + CMP-N-acetyl-beta-neuraminate = a 3-O-{alpha-Neu5Ac-(2-&gt;3)-beta-D-Gal-(1-&gt;3)-[alpha-Neu5Ac-(2-&gt;6)]-alpha-D-GalNAc}-L-seryl-[protein] + CMP + H(+)</text>
        <dbReference type="Rhea" id="RHEA:65280"/>
        <dbReference type="Rhea" id="RHEA-COMP:16760"/>
        <dbReference type="Rhea" id="RHEA-COMP:16761"/>
        <dbReference type="ChEBI" id="CHEBI:15378"/>
        <dbReference type="ChEBI" id="CHEBI:57812"/>
        <dbReference type="ChEBI" id="CHEBI:60377"/>
        <dbReference type="ChEBI" id="CHEBI:156395"/>
        <dbReference type="ChEBI" id="CHEBI:156397"/>
    </reaction>
    <physiologicalReaction direction="left-to-right" evidence="2">
        <dbReference type="Rhea" id="RHEA:65281"/>
    </physiologicalReaction>
</comment>
<comment type="catalytic activity">
    <reaction evidence="2">
        <text>3-O-[alpha-Neu5Ac-(2-&gt;3)-beta-D-Gal-(1-&gt;3)-alpha-D-GalNAc]-L-Thr-[protein] + CMP-N-acetyl-beta-neuraminate = a 3-O-{alpha-Neu5Ac-(2-&gt;3)-beta-D-Gal-(1-&gt;3)-[alpha-Neu5Ac-(2-&gt;6)]-alpha-D-GalNAc}-L-threonyl-[protein] + CMP + H(+)</text>
        <dbReference type="Rhea" id="RHEA:65284"/>
        <dbReference type="Rhea" id="RHEA-COMP:16762"/>
        <dbReference type="Rhea" id="RHEA-COMP:16763"/>
        <dbReference type="ChEBI" id="CHEBI:15378"/>
        <dbReference type="ChEBI" id="CHEBI:57812"/>
        <dbReference type="ChEBI" id="CHEBI:60377"/>
        <dbReference type="ChEBI" id="CHEBI:156396"/>
        <dbReference type="ChEBI" id="CHEBI:156398"/>
    </reaction>
    <physiologicalReaction direction="left-to-right" evidence="2">
        <dbReference type="Rhea" id="RHEA:65285"/>
    </physiologicalReaction>
</comment>
<comment type="pathway">
    <text evidence="9">Protein modification; protein glycosylation.</text>
</comment>
<comment type="pathway">
    <text evidence="9">Glycolipid biosynthesis.</text>
</comment>
<comment type="subcellular location">
    <subcellularLocation>
        <location evidence="8">Golgi apparatus membrane</location>
        <topology evidence="8">Single-pass type II membrane protein</topology>
    </subcellularLocation>
</comment>
<comment type="tissue specificity">
    <text evidence="6">In adults it is highly expressed in spleen, followed by kidney and lesser in lung. Not found in liver and skeletal muscle. In newborns it is abundantly expressed in brain and kidney.</text>
</comment>
<comment type="similarity">
    <text evidence="8">Belongs to the glycosyltransferase 29 family.</text>
</comment>
<accession>Q64686</accession>